<dbReference type="EMBL" id="AJ316582">
    <property type="protein sequence ID" value="CAC88030.1"/>
    <property type="molecule type" value="Genomic_DNA"/>
</dbReference>
<dbReference type="RefSeq" id="NP_783218.1">
    <property type="nucleotide sequence ID" value="NC_004561.1"/>
</dbReference>
<dbReference type="SMR" id="Q8S8Y2"/>
<dbReference type="GeneID" id="806555"/>
<dbReference type="GO" id="GO:0009535">
    <property type="term" value="C:chloroplast thylakoid membrane"/>
    <property type="evidence" value="ECO:0007669"/>
    <property type="project" value="UniProtKB-SubCell"/>
</dbReference>
<dbReference type="GO" id="GO:0045259">
    <property type="term" value="C:proton-transporting ATP synthase complex"/>
    <property type="evidence" value="ECO:0007669"/>
    <property type="project" value="UniProtKB-KW"/>
</dbReference>
<dbReference type="GO" id="GO:0046933">
    <property type="term" value="F:proton-transporting ATP synthase activity, rotational mechanism"/>
    <property type="evidence" value="ECO:0007669"/>
    <property type="project" value="UniProtKB-UniRule"/>
</dbReference>
<dbReference type="CDD" id="cd06503">
    <property type="entry name" value="ATP-synt_Fo_b"/>
    <property type="match status" value="1"/>
</dbReference>
<dbReference type="HAMAP" id="MF_01398">
    <property type="entry name" value="ATP_synth_b_bprime"/>
    <property type="match status" value="1"/>
</dbReference>
<dbReference type="InterPro" id="IPR002146">
    <property type="entry name" value="ATP_synth_b/b'su_bac/chlpt"/>
</dbReference>
<dbReference type="PANTHER" id="PTHR34264">
    <property type="entry name" value="ATP SYNTHASE SUBUNIT B, CHLOROPLASTIC"/>
    <property type="match status" value="1"/>
</dbReference>
<dbReference type="PANTHER" id="PTHR34264:SF3">
    <property type="entry name" value="ATP SYNTHASE SUBUNIT B, CHLOROPLASTIC"/>
    <property type="match status" value="1"/>
</dbReference>
<dbReference type="Pfam" id="PF00430">
    <property type="entry name" value="ATP-synt_B"/>
    <property type="match status" value="1"/>
</dbReference>
<evidence type="ECO:0000255" key="1">
    <source>
        <dbReference type="HAMAP-Rule" id="MF_01398"/>
    </source>
</evidence>
<reference key="1">
    <citation type="journal article" date="2002" name="Mol. Biol. Evol.">
        <title>The plastid chromosome of Atropa belladonna and its comparison with that of Nicotiana tabacum: the role of RNA editing in generating divergence in the process of plant speciation.</title>
        <authorList>
            <person name="Schmitz-Linneweber C."/>
            <person name="Regel R."/>
            <person name="Du T.G."/>
            <person name="Hupfer H."/>
            <person name="Herrmann R.G."/>
            <person name="Maier R.M."/>
        </authorList>
    </citation>
    <scope>NUCLEOTIDE SEQUENCE [LARGE SCALE GENOMIC DNA]</scope>
    <source>
        <strain>cv. Ab5p(kan)</strain>
    </source>
</reference>
<comment type="function">
    <text evidence="1">F(1)F(0) ATP synthase produces ATP from ADP in the presence of a proton or sodium gradient. F-type ATPases consist of two structural domains, F(1) containing the extramembraneous catalytic core and F(0) containing the membrane proton channel, linked together by a central stalk and a peripheral stalk. During catalysis, ATP synthesis in the catalytic domain of F(1) is coupled via a rotary mechanism of the central stalk subunits to proton translocation.</text>
</comment>
<comment type="function">
    <text evidence="1">Component of the F(0) channel, it forms part of the peripheral stalk, linking F(1) to F(0).</text>
</comment>
<comment type="subunit">
    <text evidence="1">F-type ATPases have 2 components, F(1) - the catalytic core - and F(0) - the membrane proton channel. F(1) has five subunits: alpha(3), beta(3), gamma(1), delta(1), epsilon(1). F(0) has four main subunits: a(1), b(1), b'(1) and c(10-14). The alpha and beta chains form an alternating ring which encloses part of the gamma chain. F(1) is attached to F(0) by a central stalk formed by the gamma and epsilon chains, while a peripheral stalk is formed by the delta, b and b' chains.</text>
</comment>
<comment type="subcellular location">
    <subcellularLocation>
        <location evidence="1">Plastid</location>
        <location evidence="1">Chloroplast thylakoid membrane</location>
        <topology evidence="1">Single-pass membrane protein</topology>
    </subcellularLocation>
</comment>
<comment type="miscellaneous">
    <text>In plastids the F-type ATPase is also known as CF(1)CF(0).</text>
</comment>
<comment type="similarity">
    <text evidence="1">Belongs to the ATPase B chain family.</text>
</comment>
<accession>Q8S8Y2</accession>
<organism>
    <name type="scientific">Atropa belladonna</name>
    <name type="common">Belladonna</name>
    <name type="synonym">Deadly nightshade</name>
    <dbReference type="NCBI Taxonomy" id="33113"/>
    <lineage>
        <taxon>Eukaryota</taxon>
        <taxon>Viridiplantae</taxon>
        <taxon>Streptophyta</taxon>
        <taxon>Embryophyta</taxon>
        <taxon>Tracheophyta</taxon>
        <taxon>Spermatophyta</taxon>
        <taxon>Magnoliopsida</taxon>
        <taxon>eudicotyledons</taxon>
        <taxon>Gunneridae</taxon>
        <taxon>Pentapetalae</taxon>
        <taxon>asterids</taxon>
        <taxon>lamiids</taxon>
        <taxon>Solanales</taxon>
        <taxon>Solanaceae</taxon>
        <taxon>Solanoideae</taxon>
        <taxon>Hyoscyameae</taxon>
        <taxon>Atropa</taxon>
    </lineage>
</organism>
<name>ATPF_ATRBE</name>
<keyword id="KW-0066">ATP synthesis</keyword>
<keyword id="KW-0138">CF(0)</keyword>
<keyword id="KW-0150">Chloroplast</keyword>
<keyword id="KW-0375">Hydrogen ion transport</keyword>
<keyword id="KW-0406">Ion transport</keyword>
<keyword id="KW-0472">Membrane</keyword>
<keyword id="KW-0934">Plastid</keyword>
<keyword id="KW-0793">Thylakoid</keyword>
<keyword id="KW-0812">Transmembrane</keyword>
<keyword id="KW-1133">Transmembrane helix</keyword>
<keyword id="KW-0813">Transport</keyword>
<gene>
    <name evidence="1" type="primary">atpF</name>
</gene>
<geneLocation type="chloroplast"/>
<feature type="chain" id="PRO_0000368907" description="ATP synthase subunit b, chloroplastic">
    <location>
        <begin position="1"/>
        <end position="184"/>
    </location>
</feature>
<feature type="transmembrane region" description="Helical" evidence="1">
    <location>
        <begin position="27"/>
        <end position="49"/>
    </location>
</feature>
<protein>
    <recommendedName>
        <fullName evidence="1">ATP synthase subunit b, chloroplastic</fullName>
    </recommendedName>
    <alternativeName>
        <fullName evidence="1">ATP synthase F(0) sector subunit b</fullName>
    </alternativeName>
    <alternativeName>
        <fullName evidence="1">ATPase subunit I</fullName>
    </alternativeName>
</protein>
<sequence length="184" mass="20944">MKNVTDSFVSLGHWPSAGSFGFNTDILATNPINLSVVLGVLIFFGKGVLSDLLDNRKQRILNTIRNSEELREGAIEQLEKARSRLRKVETEAEQFRVNGYSEIEREKLNLINSTYKTLEQLENYKNETIQFEQQRAINQVRQRVFQQALRGALGTLNSCLNNELHLRTISANIGMLGTMKEITD</sequence>
<proteinExistence type="inferred from homology"/>